<keyword id="KW-0233">DNA recombination</keyword>
<keyword id="KW-0238">DNA-binding</keyword>
<keyword id="KW-0814">Transposable element</keyword>
<keyword id="KW-0815">Transposition</keyword>
<accession>Q02404</accession>
<feature type="chain" id="PRO_0000173310" description="Transposase for insertion sequence element IS231F">
    <location>
        <begin position="1"/>
        <end position="477"/>
    </location>
</feature>
<dbReference type="EMBL" id="X63385">
    <property type="protein sequence ID" value="CAA44991.1"/>
    <property type="molecule type" value="Genomic_DNA"/>
</dbReference>
<dbReference type="PIR" id="S25822">
    <property type="entry name" value="S25822"/>
</dbReference>
<dbReference type="RefSeq" id="WP_001053998.1">
    <property type="nucleotide sequence ID" value="NZ_VEIF01000078.1"/>
</dbReference>
<dbReference type="GO" id="GO:0003677">
    <property type="term" value="F:DNA binding"/>
    <property type="evidence" value="ECO:0007669"/>
    <property type="project" value="UniProtKB-KW"/>
</dbReference>
<dbReference type="GO" id="GO:0004803">
    <property type="term" value="F:transposase activity"/>
    <property type="evidence" value="ECO:0007669"/>
    <property type="project" value="InterPro"/>
</dbReference>
<dbReference type="GO" id="GO:0006313">
    <property type="term" value="P:DNA transposition"/>
    <property type="evidence" value="ECO:0007669"/>
    <property type="project" value="InterPro"/>
</dbReference>
<dbReference type="InterPro" id="IPR012337">
    <property type="entry name" value="RNaseH-like_sf"/>
</dbReference>
<dbReference type="InterPro" id="IPR047952">
    <property type="entry name" value="Transpos_IS4"/>
</dbReference>
<dbReference type="InterPro" id="IPR002559">
    <property type="entry name" value="Transposase_11"/>
</dbReference>
<dbReference type="NCBIfam" id="NF033592">
    <property type="entry name" value="transpos_IS4_1"/>
    <property type="match status" value="1"/>
</dbReference>
<dbReference type="PANTHER" id="PTHR33258">
    <property type="entry name" value="TRANSPOSASE INSL FOR INSERTION SEQUENCE ELEMENT IS186A-RELATED"/>
    <property type="match status" value="1"/>
</dbReference>
<dbReference type="PANTHER" id="PTHR33258:SF1">
    <property type="entry name" value="TRANSPOSASE INSL FOR INSERTION SEQUENCE ELEMENT IS186A-RELATED"/>
    <property type="match status" value="1"/>
</dbReference>
<dbReference type="Pfam" id="PF01609">
    <property type="entry name" value="DDE_Tnp_1"/>
    <property type="match status" value="1"/>
</dbReference>
<dbReference type="SUPFAM" id="SSF53098">
    <property type="entry name" value="Ribonuclease H-like"/>
    <property type="match status" value="1"/>
</dbReference>
<comment type="function">
    <text>Involved in the transposition of the insertion sequence.</text>
</comment>
<comment type="similarity">
    <text evidence="1">Belongs to the transposase 11 family.</text>
</comment>
<reference key="1">
    <citation type="journal article" date="1992" name="Mol. Microbiol.">
        <title>IS231D, E and F, three new insertion sequences in Bacillus thuringiensis: extension of the IS231 family.</title>
        <authorList>
            <person name="Rezsoehazy R."/>
            <person name="Hallet B."/>
            <person name="Delcour J."/>
        </authorList>
    </citation>
    <scope>NUCLEOTIDE SEQUENCE [GENOMIC DNA]</scope>
    <source>
        <strain>72</strain>
    </source>
</reference>
<name>T231F_BACTI</name>
<protein>
    <recommendedName>
        <fullName>Transposase for insertion sequence element IS231F</fullName>
    </recommendedName>
</protein>
<proteinExistence type="inferred from homology"/>
<sequence length="477" mass="55870">MNLSIQEELQPFVEELQRYITPEFLEELAREMKFVKRKRKFSGSDLATICIWISQRVASDPLVRLCSRLHAVTGTVLSPEGLNKRFNEKSVLFLKHVFSLLLQQKICEQTYISNQLLSHFKRIRIMDATMFQVPHTLEHIYPGSGGCAQTAGIKIQLEYDLHSGQFFNFQVGPGKNNDKTFGTECLDTLRPGDLCIRDLGYFSLEDLDQMDQRGTYYISRLKLNTNVYVKNPSPEYFKNGAIKKQSEYIQINVIQILNQLQPGETIEYQQAYIGDKQQLFSRLVFHRLTAAQLQKRLKKIAEKEKSKHRTYSEKSKLVAGLNVYVTNAPWEWVPMEQVHELYTLRWQIEIVFKTWKSLFDIDHCRTVKQERIECHLYGKLIAIFLCSSTMFKMRQLLLQKKKKELSEYKAIGMIQDHLFLLYQSIQNTQEITKLLTRLFHLLQQNGRKSHRYEKKTVFDIMGVIYEYSGCSKQKKAA</sequence>
<organism>
    <name type="scientific">Bacillus thuringiensis subsp. israelensis</name>
    <dbReference type="NCBI Taxonomy" id="1430"/>
    <lineage>
        <taxon>Bacteria</taxon>
        <taxon>Bacillati</taxon>
        <taxon>Bacillota</taxon>
        <taxon>Bacilli</taxon>
        <taxon>Bacillales</taxon>
        <taxon>Bacillaceae</taxon>
        <taxon>Bacillus</taxon>
        <taxon>Bacillus cereus group</taxon>
    </lineage>
</organism>
<evidence type="ECO:0000305" key="1"/>